<proteinExistence type="evidence at transcript level"/>
<name>ENDOU_PAROL</name>
<organism>
    <name type="scientific">Paralichthys olivaceus</name>
    <name type="common">Bastard halibut</name>
    <name type="synonym">Hippoglossus olivaceus</name>
    <dbReference type="NCBI Taxonomy" id="8255"/>
    <lineage>
        <taxon>Eukaryota</taxon>
        <taxon>Metazoa</taxon>
        <taxon>Chordata</taxon>
        <taxon>Craniata</taxon>
        <taxon>Vertebrata</taxon>
        <taxon>Euteleostomi</taxon>
        <taxon>Actinopterygii</taxon>
        <taxon>Neopterygii</taxon>
        <taxon>Teleostei</taxon>
        <taxon>Neoteleostei</taxon>
        <taxon>Acanthomorphata</taxon>
        <taxon>Carangaria</taxon>
        <taxon>Pleuronectiformes</taxon>
        <taxon>Pleuronectoidei</taxon>
        <taxon>Paralichthyidae</taxon>
        <taxon>Paralichthys</taxon>
    </lineage>
</organism>
<reference key="1">
    <citation type="journal article" date="2002" name="Comp. Biochem. Physiol.">
        <title>A homologue of human placental protein, PP11, and mouse T cell-specific protein, Tcl-30, in exocrine pancreas of a teleost (Paralichthys olivaceus).</title>
        <authorList>
            <person name="Suzuki T."/>
            <person name="Srivastava A.S."/>
            <person name="Kurokawa T."/>
        </authorList>
    </citation>
    <scope>NUCLEOTIDE SEQUENCE [MRNA]</scope>
    <scope>TISSUE SPECIFICITY</scope>
    <source>
        <tissue>Pancreas</tissue>
    </source>
</reference>
<accession>Q9PTU6</accession>
<protein>
    <recommendedName>
        <fullName evidence="7">Uridylate-specific endoribonuclease</fullName>
        <ecNumber evidence="2">4.6.1.-</ecNumber>
    </recommendedName>
    <alternativeName>
        <fullName>Pancreatic protein with two somatomedin-B domains</fullName>
    </alternativeName>
    <alternativeName>
        <fullName>Protein endoU</fullName>
    </alternativeName>
</protein>
<sequence length="385" mass="43256">MKVIALLTLCVTLFCQGYSNSLDSCQGRCGYGTDNNFSCQCNTSCERFKDCCSDYAEQCKAGATSCKGRCDEKYNSQNKCHCNSKCSRYNNCCSDYTDICDSDAGGGGSVITDADIKAVSEVLYALDSNKATASELIIDPQALVHDSQTSSQRDLSSRPLFRYVDGTLLSRPTYAAFLAVLDNYHRMTGQVEDFSPQQLSEQETFIKEAMSNTELGRELFAFLYTKGVYASENEFLHDLKMMWFGLYSRYNNKMDSSGFEHIFAGEIKGGKVSGFHNWIQFYRLEKRGQLNYYSHSFNGPWTTFPDVMGMQFKWDGYFKQVGSAVIGCSPEFDFALYSLCYITRPGKQCRLSLGGKELIIQTYTWDKTTYGNGKKFIASAFPSTP</sequence>
<feature type="signal peptide" evidence="3">
    <location>
        <begin position="1"/>
        <end position="21"/>
    </location>
</feature>
<feature type="chain" id="PRO_0000394226" description="Uridylate-specific endoribonuclease">
    <location>
        <begin position="22"/>
        <end position="385"/>
    </location>
</feature>
<feature type="domain" description="SMB 1" evidence="4">
    <location>
        <begin position="22"/>
        <end position="61"/>
    </location>
</feature>
<feature type="domain" description="SMB 2" evidence="4">
    <location>
        <begin position="62"/>
        <end position="105"/>
    </location>
</feature>
<feature type="domain" description="EndoU" evidence="5">
    <location>
        <begin position="112"/>
        <end position="385"/>
    </location>
</feature>
<feature type="active site" evidence="5">
    <location>
        <position position="261"/>
    </location>
</feature>
<feature type="active site" evidence="5">
    <location>
        <position position="276"/>
    </location>
</feature>
<feature type="active site" evidence="5">
    <location>
        <position position="319"/>
    </location>
</feature>
<feature type="disulfide bond" description="Alternate" evidence="4">
    <location>
        <begin position="25"/>
        <end position="41"/>
    </location>
</feature>
<feature type="disulfide bond" description="Alternate" evidence="4">
    <location>
        <begin position="25"/>
        <end position="29"/>
    </location>
</feature>
<feature type="disulfide bond" description="Alternate" evidence="4">
    <location>
        <begin position="29"/>
        <end position="59"/>
    </location>
</feature>
<feature type="disulfide bond" description="Alternate" evidence="4">
    <location>
        <begin position="39"/>
        <end position="52"/>
    </location>
</feature>
<feature type="disulfide bond" description="Alternate" evidence="4">
    <location>
        <begin position="39"/>
        <end position="41"/>
    </location>
</feature>
<feature type="disulfide bond" evidence="4">
    <location>
        <begin position="45"/>
        <end position="51"/>
    </location>
</feature>
<feature type="disulfide bond" description="Alternate" evidence="4">
    <location>
        <begin position="52"/>
        <end position="59"/>
    </location>
</feature>
<feature type="disulfide bond" description="Alternate" evidence="4">
    <location>
        <begin position="66"/>
        <end position="82"/>
    </location>
</feature>
<feature type="disulfide bond" description="Alternate" evidence="4">
    <location>
        <begin position="66"/>
        <end position="70"/>
    </location>
</feature>
<feature type="disulfide bond" description="Alternate" evidence="4">
    <location>
        <begin position="70"/>
        <end position="100"/>
    </location>
</feature>
<feature type="disulfide bond" description="Alternate" evidence="4">
    <location>
        <begin position="80"/>
        <end position="93"/>
    </location>
</feature>
<feature type="disulfide bond" description="Alternate" evidence="4">
    <location>
        <begin position="80"/>
        <end position="82"/>
    </location>
</feature>
<feature type="disulfide bond" evidence="4">
    <location>
        <begin position="86"/>
        <end position="92"/>
    </location>
</feature>
<feature type="disulfide bond" description="Alternate" evidence="4">
    <location>
        <begin position="93"/>
        <end position="100"/>
    </location>
</feature>
<gene>
    <name type="primary">endou</name>
    <name type="synonym">ppsb</name>
</gene>
<evidence type="ECO:0000250" key="1"/>
<evidence type="ECO:0000250" key="2">
    <source>
        <dbReference type="UniProtKB" id="P21128"/>
    </source>
</evidence>
<evidence type="ECO:0000255" key="3"/>
<evidence type="ECO:0000255" key="4">
    <source>
        <dbReference type="PROSITE-ProRule" id="PRU00350"/>
    </source>
</evidence>
<evidence type="ECO:0000255" key="5">
    <source>
        <dbReference type="PROSITE-ProRule" id="PRU01304"/>
    </source>
</evidence>
<evidence type="ECO:0000269" key="6">
    <source>
    </source>
</evidence>
<evidence type="ECO:0000305" key="7"/>
<comment type="function">
    <text evidence="2">Endoribonuclease that cleaves single-stranded RNAs at 5' of uridylates and releases a product with a 2',3'-cyclic phosphate at the 3'-end. The UU and GU sites are more efficiently cleaved than CU and AU sites.</text>
</comment>
<comment type="catalytic activity">
    <reaction evidence="2">
        <text>ribonucleotidyl-uridine-RNA = a 5'-end dephospho-uridine-RNA + a 3'-end 2',3'-cyclophospho-ribonucleotide-RNA</text>
        <dbReference type="Rhea" id="RHEA:67792"/>
        <dbReference type="Rhea" id="RHEA-COMP:10464"/>
        <dbReference type="Rhea" id="RHEA-COMP:17354"/>
        <dbReference type="Rhea" id="RHEA-COMP:17356"/>
        <dbReference type="ChEBI" id="CHEBI:83064"/>
        <dbReference type="ChEBI" id="CHEBI:173117"/>
        <dbReference type="ChEBI" id="CHEBI:173224"/>
    </reaction>
    <physiologicalReaction direction="left-to-right" evidence="2">
        <dbReference type="Rhea" id="RHEA:67793"/>
    </physiologicalReaction>
</comment>
<comment type="cofactor">
    <cofactor evidence="1">
        <name>Mn(2+)</name>
        <dbReference type="ChEBI" id="CHEBI:29035"/>
    </cofactor>
</comment>
<comment type="subunit">
    <text evidence="1">Monomer.</text>
</comment>
<comment type="subcellular location">
    <subcellularLocation>
        <location evidence="7">Secreted</location>
    </subcellularLocation>
</comment>
<comment type="tissue specificity">
    <text evidence="6">Specifically expressed by the exocrine pancreatic acinar cells.</text>
</comment>
<comment type="similarity">
    <text evidence="7">Belongs to the ENDOU family.</text>
</comment>
<dbReference type="EC" id="4.6.1.-" evidence="2"/>
<dbReference type="EMBL" id="AB035673">
    <property type="protein sequence ID" value="BAA88246.1"/>
    <property type="molecule type" value="mRNA"/>
</dbReference>
<dbReference type="RefSeq" id="XP_019965028.1">
    <property type="nucleotide sequence ID" value="XM_020109469.2"/>
</dbReference>
<dbReference type="SMR" id="Q9PTU6"/>
<dbReference type="GeneID" id="109644140"/>
<dbReference type="KEGG" id="pov:109644140"/>
<dbReference type="CTD" id="8909"/>
<dbReference type="OrthoDB" id="430326at2759"/>
<dbReference type="GO" id="GO:0005576">
    <property type="term" value="C:extracellular region"/>
    <property type="evidence" value="ECO:0007669"/>
    <property type="project" value="UniProtKB-SubCell"/>
</dbReference>
<dbReference type="GO" id="GO:0016829">
    <property type="term" value="F:lyase activity"/>
    <property type="evidence" value="ECO:0007669"/>
    <property type="project" value="UniProtKB-KW"/>
</dbReference>
<dbReference type="GO" id="GO:0046872">
    <property type="term" value="F:metal ion binding"/>
    <property type="evidence" value="ECO:0007669"/>
    <property type="project" value="UniProtKB-KW"/>
</dbReference>
<dbReference type="GO" id="GO:0030247">
    <property type="term" value="F:polysaccharide binding"/>
    <property type="evidence" value="ECO:0007669"/>
    <property type="project" value="InterPro"/>
</dbReference>
<dbReference type="GO" id="GO:0003723">
    <property type="term" value="F:RNA binding"/>
    <property type="evidence" value="ECO:0000250"/>
    <property type="project" value="UniProtKB"/>
</dbReference>
<dbReference type="GO" id="GO:0004521">
    <property type="term" value="F:RNA endonuclease activity"/>
    <property type="evidence" value="ECO:0000250"/>
    <property type="project" value="UniProtKB"/>
</dbReference>
<dbReference type="GO" id="GO:0005044">
    <property type="term" value="F:scavenger receptor activity"/>
    <property type="evidence" value="ECO:0007669"/>
    <property type="project" value="InterPro"/>
</dbReference>
<dbReference type="GO" id="GO:0006955">
    <property type="term" value="P:immune response"/>
    <property type="evidence" value="ECO:0007669"/>
    <property type="project" value="InterPro"/>
</dbReference>
<dbReference type="CDD" id="cd21159">
    <property type="entry name" value="XendoU"/>
    <property type="match status" value="1"/>
</dbReference>
<dbReference type="FunFam" id="4.10.410.20:FF:000005">
    <property type="entry name" value="Endonuclease, poly(U) specific"/>
    <property type="match status" value="1"/>
</dbReference>
<dbReference type="Gene3D" id="4.10.410.20">
    <property type="match status" value="2"/>
</dbReference>
<dbReference type="InterPro" id="IPR039787">
    <property type="entry name" value="ENDOU"/>
</dbReference>
<dbReference type="InterPro" id="IPR037227">
    <property type="entry name" value="EndoU-like"/>
</dbReference>
<dbReference type="InterPro" id="IPR018998">
    <property type="entry name" value="EndoU_C"/>
</dbReference>
<dbReference type="InterPro" id="IPR020436">
    <property type="entry name" value="SMB_chordata"/>
</dbReference>
<dbReference type="InterPro" id="IPR036024">
    <property type="entry name" value="Somatomedin_B-like_dom_sf"/>
</dbReference>
<dbReference type="InterPro" id="IPR001212">
    <property type="entry name" value="Somatomedin_B_dom"/>
</dbReference>
<dbReference type="PANTHER" id="PTHR12439">
    <property type="entry name" value="PLACENTAL PROTEIN 11-RELATED"/>
    <property type="match status" value="1"/>
</dbReference>
<dbReference type="PANTHER" id="PTHR12439:SF40">
    <property type="entry name" value="URIDYLATE-SPECIFIC ENDORIBONUCLEASE"/>
    <property type="match status" value="1"/>
</dbReference>
<dbReference type="Pfam" id="PF01033">
    <property type="entry name" value="Somatomedin_B"/>
    <property type="match status" value="2"/>
</dbReference>
<dbReference type="Pfam" id="PF09412">
    <property type="entry name" value="XendoU"/>
    <property type="match status" value="1"/>
</dbReference>
<dbReference type="PRINTS" id="PR00022">
    <property type="entry name" value="SOMATOMEDINB"/>
</dbReference>
<dbReference type="SMART" id="SM00201">
    <property type="entry name" value="SO"/>
    <property type="match status" value="2"/>
</dbReference>
<dbReference type="SUPFAM" id="SSF142877">
    <property type="entry name" value="EndoU-like"/>
    <property type="match status" value="1"/>
</dbReference>
<dbReference type="SUPFAM" id="SSF90188">
    <property type="entry name" value="Somatomedin B domain"/>
    <property type="match status" value="2"/>
</dbReference>
<dbReference type="PROSITE" id="PS51959">
    <property type="entry name" value="ENDOU"/>
    <property type="match status" value="1"/>
</dbReference>
<dbReference type="PROSITE" id="PS00524">
    <property type="entry name" value="SMB_1"/>
    <property type="match status" value="2"/>
</dbReference>
<dbReference type="PROSITE" id="PS50958">
    <property type="entry name" value="SMB_2"/>
    <property type="match status" value="2"/>
</dbReference>
<keyword id="KW-1015">Disulfide bond</keyword>
<keyword id="KW-0255">Endonuclease</keyword>
<keyword id="KW-0378">Hydrolase</keyword>
<keyword id="KW-0456">Lyase</keyword>
<keyword id="KW-0464">Manganese</keyword>
<keyword id="KW-0479">Metal-binding</keyword>
<keyword id="KW-0540">Nuclease</keyword>
<keyword id="KW-0677">Repeat</keyword>
<keyword id="KW-0694">RNA-binding</keyword>
<keyword id="KW-0964">Secreted</keyword>
<keyword id="KW-0732">Signal</keyword>